<comment type="subcellular location">
    <subcellularLocation>
        <location>Secreted</location>
        <location>Cell wall</location>
    </subcellularLocation>
</comment>
<comment type="similarity">
    <text evidence="2 4">Belongs to the peptidase C40 family.</text>
</comment>
<comment type="sequence caution" evidence="4">
    <conflict type="erroneous initiation">
        <sequence resource="EMBL-CDS" id="CAA34442"/>
    </conflict>
</comment>
<feature type="signal peptide" evidence="1">
    <location>
        <begin position="1"/>
        <end position="27"/>
    </location>
</feature>
<feature type="chain" id="PRO_0000026544" description="Protein P54">
    <location>
        <begin position="28"/>
        <end position="516"/>
    </location>
</feature>
<feature type="domain" description="NlpC/P60" evidence="2">
    <location>
        <begin position="399"/>
        <end position="516"/>
    </location>
</feature>
<feature type="region of interest" description="Disordered" evidence="3">
    <location>
        <begin position="208"/>
        <end position="397"/>
    </location>
</feature>
<feature type="compositionally biased region" description="Basic and acidic residues" evidence="3">
    <location>
        <begin position="210"/>
        <end position="236"/>
    </location>
</feature>
<feature type="compositionally biased region" description="Low complexity" evidence="3">
    <location>
        <begin position="237"/>
        <end position="247"/>
    </location>
</feature>
<feature type="compositionally biased region" description="Low complexity" evidence="3">
    <location>
        <begin position="257"/>
        <end position="380"/>
    </location>
</feature>
<feature type="compositionally biased region" description="Pro residues" evidence="3">
    <location>
        <begin position="381"/>
        <end position="395"/>
    </location>
</feature>
<feature type="active site" description="Nucleophile" evidence="2">
    <location>
        <position position="429"/>
    </location>
</feature>
<feature type="active site" description="Proton acceptor" evidence="2">
    <location>
        <position position="480"/>
    </location>
</feature>
<feature type="active site" evidence="2">
    <location>
        <position position="492"/>
    </location>
</feature>
<reference key="1">
    <citation type="journal article" date="1989" name="Nucleic Acids Res.">
        <title>A protein of unusual composition from Enterococcus faecium.</title>
        <authorList>
            <person name="Fuerst P."/>
            <person name="Moesch H.-U."/>
            <person name="Solioz M."/>
        </authorList>
    </citation>
    <scope>NUCLEOTIDE SEQUENCE [GENOMIC DNA]</scope>
</reference>
<proteinExistence type="inferred from homology"/>
<sequence length="516" mass="54596">MKKSLLSAVMLSSIALTAVGSPIAAAADDFDSQIQQQDKKIADLQNQQASAQSQIEALEGQVSAINTKAQDLLTKQDTLRKESAQLKQEIKDLQERIEKREATIQKQARETQVKNTSSNYIDAVLNADSLADAVGRIQAMSTIVKANQDLVQQQKEDKQAVEAKKAENEAKQKELADNQAALESQKGDLLAKQADLNVLKTSLAAEQATAEDKKADLNRKKAEAEAEQARIREQARLAEQARQQAAQEKAEKEAREQAAAQAAQTQALSSASTTTESSSAAQSSSEESKAPESSTTEESTSTESSTTTENSSTGSSSTESSSTEESTVPESSTQESTPANTESSSSSSNTNVNNNTNNSTNNSTNNSTTNNNNNNNTVTPAPTPTPTPAPAPAPNPSGSVNGAAIVAEAYKYIGTPYVWGGKDPSGFDCSGFTRYVYLQVTGRDIGGWTVPQESAGTKISVSQAKAGDLLFWGSAGGTYHVAISLGGGQYIHAPQPGENVKVGSVQWYTPDFAVSM</sequence>
<dbReference type="EMBL" id="X16421">
    <property type="protein sequence ID" value="CAA34442.1"/>
    <property type="status" value="ALT_INIT"/>
    <property type="molecule type" value="Genomic_DNA"/>
</dbReference>
<dbReference type="PIR" id="S05542">
    <property type="entry name" value="S05542"/>
</dbReference>
<dbReference type="SMR" id="P13692"/>
<dbReference type="STRING" id="1352.AL014_13485"/>
<dbReference type="GO" id="GO:0005576">
    <property type="term" value="C:extracellular region"/>
    <property type="evidence" value="ECO:0007669"/>
    <property type="project" value="UniProtKB-KW"/>
</dbReference>
<dbReference type="GO" id="GO:0008234">
    <property type="term" value="F:cysteine-type peptidase activity"/>
    <property type="evidence" value="ECO:0007669"/>
    <property type="project" value="UniProtKB-KW"/>
</dbReference>
<dbReference type="GO" id="GO:0006508">
    <property type="term" value="P:proteolysis"/>
    <property type="evidence" value="ECO:0007669"/>
    <property type="project" value="UniProtKB-KW"/>
</dbReference>
<dbReference type="Gene3D" id="6.10.250.3150">
    <property type="match status" value="1"/>
</dbReference>
<dbReference type="Gene3D" id="3.90.1720.10">
    <property type="entry name" value="endopeptidase domain like (from Nostoc punctiforme)"/>
    <property type="match status" value="1"/>
</dbReference>
<dbReference type="InterPro" id="IPR000064">
    <property type="entry name" value="NLP_P60_dom"/>
</dbReference>
<dbReference type="InterPro" id="IPR038765">
    <property type="entry name" value="Papain-like_cys_pep_sf"/>
</dbReference>
<dbReference type="InterPro" id="IPR051202">
    <property type="entry name" value="Peptidase_C40"/>
</dbReference>
<dbReference type="PANTHER" id="PTHR47053">
    <property type="entry name" value="MUREIN DD-ENDOPEPTIDASE MEPH-RELATED"/>
    <property type="match status" value="1"/>
</dbReference>
<dbReference type="PANTHER" id="PTHR47053:SF1">
    <property type="entry name" value="MUREIN DD-ENDOPEPTIDASE MEPH-RELATED"/>
    <property type="match status" value="1"/>
</dbReference>
<dbReference type="Pfam" id="PF24568">
    <property type="entry name" value="CC_PcsB"/>
    <property type="match status" value="1"/>
</dbReference>
<dbReference type="Pfam" id="PF00877">
    <property type="entry name" value="NLPC_P60"/>
    <property type="match status" value="1"/>
</dbReference>
<dbReference type="SUPFAM" id="SSF54001">
    <property type="entry name" value="Cysteine proteinases"/>
    <property type="match status" value="1"/>
</dbReference>
<dbReference type="SUPFAM" id="SSF90257">
    <property type="entry name" value="Myosin rod fragments"/>
    <property type="match status" value="1"/>
</dbReference>
<dbReference type="PROSITE" id="PS51935">
    <property type="entry name" value="NLPC_P60"/>
    <property type="match status" value="1"/>
</dbReference>
<evidence type="ECO:0000255" key="1"/>
<evidence type="ECO:0000255" key="2">
    <source>
        <dbReference type="PROSITE-ProRule" id="PRU01284"/>
    </source>
</evidence>
<evidence type="ECO:0000256" key="3">
    <source>
        <dbReference type="SAM" id="MobiDB-lite"/>
    </source>
</evidence>
<evidence type="ECO:0000305" key="4"/>
<protein>
    <recommendedName>
        <fullName>Protein P54</fullName>
    </recommendedName>
</protein>
<name>P54_ENTFC</name>
<organism>
    <name type="scientific">Enterococcus faecium</name>
    <name type="common">Streptococcus faecium</name>
    <dbReference type="NCBI Taxonomy" id="1352"/>
    <lineage>
        <taxon>Bacteria</taxon>
        <taxon>Bacillati</taxon>
        <taxon>Bacillota</taxon>
        <taxon>Bacilli</taxon>
        <taxon>Lactobacillales</taxon>
        <taxon>Enterococcaceae</taxon>
        <taxon>Enterococcus</taxon>
    </lineage>
</organism>
<accession>P13692</accession>
<keyword id="KW-0134">Cell wall</keyword>
<keyword id="KW-0378">Hydrolase</keyword>
<keyword id="KW-0645">Protease</keyword>
<keyword id="KW-0964">Secreted</keyword>
<keyword id="KW-0732">Signal</keyword>
<keyword id="KW-0788">Thiol protease</keyword>